<sequence>MTLNERIAELRERVRQQRPLIHHITNFVVMNDTANVTLHIGGLPVMAHDRAEVAEMVTAAGALVLNVGTLSPDWIEAMLIAGRRANELGIPIVLDPVGAGATSLRTASNRRLLEELQIAVVRGNSGEIGALAGMGGVVKGVETVVEVDDPTAAAKALAQQYRTVVAVTGRQDVVTDGKRVFLVDNGHEWLKTLTGTGCSATTVIAAFAAVEREYPFAAAAALACFGLAAELAAPAARGPASFKVAFYDAIYHLSADQIRAGARVTAVAG</sequence>
<accession>A9WDL9</accession>
<reference key="1">
    <citation type="journal article" date="2011" name="BMC Genomics">
        <title>Complete genome sequence of the filamentous anoxygenic phototrophic bacterium Chloroflexus aurantiacus.</title>
        <authorList>
            <person name="Tang K.H."/>
            <person name="Barry K."/>
            <person name="Chertkov O."/>
            <person name="Dalin E."/>
            <person name="Han C.S."/>
            <person name="Hauser L.J."/>
            <person name="Honchak B.M."/>
            <person name="Karbach L.E."/>
            <person name="Land M.L."/>
            <person name="Lapidus A."/>
            <person name="Larimer F.W."/>
            <person name="Mikhailova N."/>
            <person name="Pitluck S."/>
            <person name="Pierson B.K."/>
            <person name="Blankenship R.E."/>
        </authorList>
    </citation>
    <scope>NUCLEOTIDE SEQUENCE [LARGE SCALE GENOMIC DNA]</scope>
    <source>
        <strain>ATCC 29366 / DSM 635 / J-10-fl</strain>
    </source>
</reference>
<gene>
    <name evidence="1" type="primary">thiM</name>
    <name type="ordered locus">Caur_0375</name>
</gene>
<organism>
    <name type="scientific">Chloroflexus aurantiacus (strain ATCC 29366 / DSM 635 / J-10-fl)</name>
    <dbReference type="NCBI Taxonomy" id="324602"/>
    <lineage>
        <taxon>Bacteria</taxon>
        <taxon>Bacillati</taxon>
        <taxon>Chloroflexota</taxon>
        <taxon>Chloroflexia</taxon>
        <taxon>Chloroflexales</taxon>
        <taxon>Chloroflexineae</taxon>
        <taxon>Chloroflexaceae</taxon>
        <taxon>Chloroflexus</taxon>
    </lineage>
</organism>
<comment type="function">
    <text evidence="1">Catalyzes the phosphorylation of the hydroxyl group of 4-methyl-5-beta-hydroxyethylthiazole (THZ).</text>
</comment>
<comment type="catalytic activity">
    <reaction evidence="1">
        <text>5-(2-hydroxyethyl)-4-methylthiazole + ATP = 4-methyl-5-(2-phosphooxyethyl)-thiazole + ADP + H(+)</text>
        <dbReference type="Rhea" id="RHEA:24212"/>
        <dbReference type="ChEBI" id="CHEBI:15378"/>
        <dbReference type="ChEBI" id="CHEBI:17957"/>
        <dbReference type="ChEBI" id="CHEBI:30616"/>
        <dbReference type="ChEBI" id="CHEBI:58296"/>
        <dbReference type="ChEBI" id="CHEBI:456216"/>
        <dbReference type="EC" id="2.7.1.50"/>
    </reaction>
</comment>
<comment type="cofactor">
    <cofactor evidence="1">
        <name>Mg(2+)</name>
        <dbReference type="ChEBI" id="CHEBI:18420"/>
    </cofactor>
</comment>
<comment type="pathway">
    <text evidence="1">Cofactor biosynthesis; thiamine diphosphate biosynthesis; 4-methyl-5-(2-phosphoethyl)-thiazole from 5-(2-hydroxyethyl)-4-methylthiazole: step 1/1.</text>
</comment>
<comment type="similarity">
    <text evidence="1">Belongs to the Thz kinase family.</text>
</comment>
<feature type="chain" id="PRO_1000078215" description="Hydroxyethylthiazole kinase">
    <location>
        <begin position="1"/>
        <end position="269"/>
    </location>
</feature>
<feature type="binding site" evidence="1">
    <location>
        <position position="46"/>
    </location>
    <ligand>
        <name>substrate</name>
    </ligand>
</feature>
<feature type="binding site" evidence="1">
    <location>
        <position position="122"/>
    </location>
    <ligand>
        <name>ATP</name>
        <dbReference type="ChEBI" id="CHEBI:30616"/>
    </ligand>
</feature>
<feature type="binding site" evidence="1">
    <location>
        <position position="168"/>
    </location>
    <ligand>
        <name>ATP</name>
        <dbReference type="ChEBI" id="CHEBI:30616"/>
    </ligand>
</feature>
<feature type="binding site" evidence="1">
    <location>
        <position position="195"/>
    </location>
    <ligand>
        <name>substrate</name>
    </ligand>
</feature>
<evidence type="ECO:0000255" key="1">
    <source>
        <dbReference type="HAMAP-Rule" id="MF_00228"/>
    </source>
</evidence>
<proteinExistence type="inferred from homology"/>
<keyword id="KW-0067">ATP-binding</keyword>
<keyword id="KW-0418">Kinase</keyword>
<keyword id="KW-0460">Magnesium</keyword>
<keyword id="KW-0479">Metal-binding</keyword>
<keyword id="KW-0547">Nucleotide-binding</keyword>
<keyword id="KW-1185">Reference proteome</keyword>
<keyword id="KW-0784">Thiamine biosynthesis</keyword>
<keyword id="KW-0808">Transferase</keyword>
<name>THIM_CHLAA</name>
<dbReference type="EC" id="2.7.1.50" evidence="1"/>
<dbReference type="EMBL" id="CP000909">
    <property type="protein sequence ID" value="ABY33625.1"/>
    <property type="molecule type" value="Genomic_DNA"/>
</dbReference>
<dbReference type="RefSeq" id="WP_012256281.1">
    <property type="nucleotide sequence ID" value="NC_010175.1"/>
</dbReference>
<dbReference type="RefSeq" id="YP_001634014.1">
    <property type="nucleotide sequence ID" value="NC_010175.1"/>
</dbReference>
<dbReference type="SMR" id="A9WDL9"/>
<dbReference type="FunCoup" id="A9WDL9">
    <property type="interactions" value="183"/>
</dbReference>
<dbReference type="STRING" id="324602.Caur_0375"/>
<dbReference type="EnsemblBacteria" id="ABY33625">
    <property type="protein sequence ID" value="ABY33625"/>
    <property type="gene ID" value="Caur_0375"/>
</dbReference>
<dbReference type="KEGG" id="cau:Caur_0375"/>
<dbReference type="PATRIC" id="fig|324602.8.peg.427"/>
<dbReference type="eggNOG" id="COG2145">
    <property type="taxonomic scope" value="Bacteria"/>
</dbReference>
<dbReference type="HOGENOM" id="CLU_019943_0_1_0"/>
<dbReference type="InParanoid" id="A9WDL9"/>
<dbReference type="UniPathway" id="UPA00060">
    <property type="reaction ID" value="UER00139"/>
</dbReference>
<dbReference type="Proteomes" id="UP000002008">
    <property type="component" value="Chromosome"/>
</dbReference>
<dbReference type="GO" id="GO:0005524">
    <property type="term" value="F:ATP binding"/>
    <property type="evidence" value="ECO:0007669"/>
    <property type="project" value="UniProtKB-UniRule"/>
</dbReference>
<dbReference type="GO" id="GO:0004417">
    <property type="term" value="F:hydroxyethylthiazole kinase activity"/>
    <property type="evidence" value="ECO:0007669"/>
    <property type="project" value="UniProtKB-UniRule"/>
</dbReference>
<dbReference type="GO" id="GO:0000287">
    <property type="term" value="F:magnesium ion binding"/>
    <property type="evidence" value="ECO:0007669"/>
    <property type="project" value="UniProtKB-UniRule"/>
</dbReference>
<dbReference type="GO" id="GO:0009228">
    <property type="term" value="P:thiamine biosynthetic process"/>
    <property type="evidence" value="ECO:0007669"/>
    <property type="project" value="UniProtKB-KW"/>
</dbReference>
<dbReference type="GO" id="GO:0009229">
    <property type="term" value="P:thiamine diphosphate biosynthetic process"/>
    <property type="evidence" value="ECO:0007669"/>
    <property type="project" value="UniProtKB-UniRule"/>
</dbReference>
<dbReference type="CDD" id="cd01170">
    <property type="entry name" value="THZ_kinase"/>
    <property type="match status" value="1"/>
</dbReference>
<dbReference type="Gene3D" id="3.40.1190.20">
    <property type="match status" value="1"/>
</dbReference>
<dbReference type="HAMAP" id="MF_00228">
    <property type="entry name" value="Thz_kinase"/>
    <property type="match status" value="1"/>
</dbReference>
<dbReference type="InterPro" id="IPR000417">
    <property type="entry name" value="Hyethyz_kinase"/>
</dbReference>
<dbReference type="InterPro" id="IPR029056">
    <property type="entry name" value="Ribokinase-like"/>
</dbReference>
<dbReference type="NCBIfam" id="NF006830">
    <property type="entry name" value="PRK09355.1"/>
    <property type="match status" value="1"/>
</dbReference>
<dbReference type="NCBIfam" id="TIGR00694">
    <property type="entry name" value="thiM"/>
    <property type="match status" value="1"/>
</dbReference>
<dbReference type="Pfam" id="PF02110">
    <property type="entry name" value="HK"/>
    <property type="match status" value="1"/>
</dbReference>
<dbReference type="PIRSF" id="PIRSF000513">
    <property type="entry name" value="Thz_kinase"/>
    <property type="match status" value="1"/>
</dbReference>
<dbReference type="PRINTS" id="PR01099">
    <property type="entry name" value="HYETHTZKNASE"/>
</dbReference>
<dbReference type="SUPFAM" id="SSF53613">
    <property type="entry name" value="Ribokinase-like"/>
    <property type="match status" value="1"/>
</dbReference>
<protein>
    <recommendedName>
        <fullName evidence="1">Hydroxyethylthiazole kinase</fullName>
        <ecNumber evidence="1">2.7.1.50</ecNumber>
    </recommendedName>
    <alternativeName>
        <fullName evidence="1">4-methyl-5-beta-hydroxyethylthiazole kinase</fullName>
        <shortName evidence="1">TH kinase</shortName>
        <shortName evidence="1">Thz kinase</shortName>
    </alternativeName>
</protein>